<dbReference type="EMBL" id="CR382130">
    <property type="protein sequence ID" value="CAG81247.1"/>
    <property type="molecule type" value="Genomic_DNA"/>
</dbReference>
<dbReference type="RefSeq" id="XP_503055.1">
    <property type="nucleotide sequence ID" value="XM_503055.1"/>
</dbReference>
<dbReference type="SMR" id="Q6C8F7"/>
<dbReference type="STRING" id="284591.Q6C8F7"/>
<dbReference type="EnsemblFungi" id="CAG81247">
    <property type="protein sequence ID" value="CAG81247"/>
    <property type="gene ID" value="YALI0_D20042g"/>
</dbReference>
<dbReference type="KEGG" id="yli:2911195"/>
<dbReference type="VEuPathDB" id="FungiDB:YALI0_D20042g"/>
<dbReference type="HOGENOM" id="CLU_341033_0_0_1"/>
<dbReference type="InParanoid" id="Q6C8F7"/>
<dbReference type="OMA" id="STTINRH"/>
<dbReference type="OrthoDB" id="2794at4891"/>
<dbReference type="Proteomes" id="UP000001300">
    <property type="component" value="Chromosome D"/>
</dbReference>
<dbReference type="GO" id="GO:0005886">
    <property type="term" value="C:plasma membrane"/>
    <property type="evidence" value="ECO:0000318"/>
    <property type="project" value="GO_Central"/>
</dbReference>
<dbReference type="GO" id="GO:0072659">
    <property type="term" value="P:protein localization to plasma membrane"/>
    <property type="evidence" value="ECO:0000318"/>
    <property type="project" value="GO_Central"/>
</dbReference>
<dbReference type="InterPro" id="IPR016024">
    <property type="entry name" value="ARM-type_fold"/>
</dbReference>
<dbReference type="InterPro" id="IPR039786">
    <property type="entry name" value="EFR3"/>
</dbReference>
<dbReference type="InterPro" id="IPR049150">
    <property type="entry name" value="EFR3_HEAT-like_rpt"/>
</dbReference>
<dbReference type="PANTHER" id="PTHR47766">
    <property type="entry name" value="PROTEIN EFR3"/>
    <property type="match status" value="1"/>
</dbReference>
<dbReference type="PANTHER" id="PTHR47766:SF1">
    <property type="entry name" value="PROTEIN EFR3"/>
    <property type="match status" value="1"/>
</dbReference>
<dbReference type="Pfam" id="PF21072">
    <property type="entry name" value="EFR3"/>
    <property type="match status" value="1"/>
</dbReference>
<dbReference type="SUPFAM" id="SSF48371">
    <property type="entry name" value="ARM repeat"/>
    <property type="match status" value="1"/>
</dbReference>
<proteinExistence type="inferred from homology"/>
<gene>
    <name type="primary">EFR3</name>
    <name type="ordered locus">YALI0D20042g</name>
</gene>
<feature type="chain" id="PRO_0000270785" description="Protein EFR3">
    <location>
        <begin position="1"/>
        <end position="850"/>
    </location>
</feature>
<organism>
    <name type="scientific">Yarrowia lipolytica (strain CLIB 122 / E 150)</name>
    <name type="common">Yeast</name>
    <name type="synonym">Candida lipolytica</name>
    <dbReference type="NCBI Taxonomy" id="284591"/>
    <lineage>
        <taxon>Eukaryota</taxon>
        <taxon>Fungi</taxon>
        <taxon>Dikarya</taxon>
        <taxon>Ascomycota</taxon>
        <taxon>Saccharomycotina</taxon>
        <taxon>Dipodascomycetes</taxon>
        <taxon>Dipodascales</taxon>
        <taxon>Dipodascales incertae sedis</taxon>
        <taxon>Yarrowia</taxon>
    </lineage>
</organism>
<evidence type="ECO:0000305" key="1"/>
<sequence>MAPGIPKPRHQRLVLQCYPDGQAADKKPNPSELSYLLFYVNHRRVKLEKVGPFLENKCYKDVSRGRQGNVMVALDIFAKLIEECHEDLNLFAQNVVNTLLDVVNSGDLLLCQHSNKVFALFCQYHDGGLFLGDPEFVRSFKQLLEVYVNMAKVPNGPNSVQWKIVGLEAAKSIAGSAAIATQTGSTSISPIVHLLLSSLQESQSDLEQLDHSLDLGGGLPDNIGGSKRNSMHQDAIDNFIHEESPEKQVRYLSFHALRTFFDTTSVVQIQSATRAIVTYIINSNVPEHWATSLVVIVAKWAPVQYRFVILVSLVEMLVAMSPNNVKSELVVAALIHALLSSTVNMVGLSVMDILGSLLNKQAAIIKHAQSNNEASGAFEELIDKLSACMISLGTHIYYADQISDMVGEVLWRCTDPATAGQTGHAVSADDGTGLQIKRPTRRVFTTLSANNAELQHSSDESVGAATGGTANGSAGVGSFSHDNSPDVLIRRLAIVEGFFRLQNEEQDMTAHNSVPLSAWDGTQYLLNHDSAIVKEAYVFCFVAFLEYEFGNPDRFQIGFGRRGYNQNVAYGFVSHLSMQLNKLITNTRATNGDFLLGNSLLQNIVIRLQQDGVVATFPHMLKAHELGRALVTGQSSESNTLAQGIIIEDIFTLYLKQVGDVSDAADLTVQAGDEVALRKKLGLWPNYLDWPVSSSSRIQDADAQIDTSMVAKMKTLSRSEVEGLFAEYVTSMPQETRAELFSDYDDVMTIHSRQQVPDENLIVGKARSLKQLNAGSILERQTMRDGWLGDDVKNNKFAEERKGFTPTVSDLKGAMGGNAYVSKEPIAQKFDPQTFLNTWTVTDNLGGLTV</sequence>
<keyword id="KW-1185">Reference proteome</keyword>
<reference key="1">
    <citation type="journal article" date="2004" name="Nature">
        <title>Genome evolution in yeasts.</title>
        <authorList>
            <person name="Dujon B."/>
            <person name="Sherman D."/>
            <person name="Fischer G."/>
            <person name="Durrens P."/>
            <person name="Casaregola S."/>
            <person name="Lafontaine I."/>
            <person name="de Montigny J."/>
            <person name="Marck C."/>
            <person name="Neuveglise C."/>
            <person name="Talla E."/>
            <person name="Goffard N."/>
            <person name="Frangeul L."/>
            <person name="Aigle M."/>
            <person name="Anthouard V."/>
            <person name="Babour A."/>
            <person name="Barbe V."/>
            <person name="Barnay S."/>
            <person name="Blanchin S."/>
            <person name="Beckerich J.-M."/>
            <person name="Beyne E."/>
            <person name="Bleykasten C."/>
            <person name="Boisrame A."/>
            <person name="Boyer J."/>
            <person name="Cattolico L."/>
            <person name="Confanioleri F."/>
            <person name="de Daruvar A."/>
            <person name="Despons L."/>
            <person name="Fabre E."/>
            <person name="Fairhead C."/>
            <person name="Ferry-Dumazet H."/>
            <person name="Groppi A."/>
            <person name="Hantraye F."/>
            <person name="Hennequin C."/>
            <person name="Jauniaux N."/>
            <person name="Joyet P."/>
            <person name="Kachouri R."/>
            <person name="Kerrest A."/>
            <person name="Koszul R."/>
            <person name="Lemaire M."/>
            <person name="Lesur I."/>
            <person name="Ma L."/>
            <person name="Muller H."/>
            <person name="Nicaud J.-M."/>
            <person name="Nikolski M."/>
            <person name="Oztas S."/>
            <person name="Ozier-Kalogeropoulos O."/>
            <person name="Pellenz S."/>
            <person name="Potier S."/>
            <person name="Richard G.-F."/>
            <person name="Straub M.-L."/>
            <person name="Suleau A."/>
            <person name="Swennen D."/>
            <person name="Tekaia F."/>
            <person name="Wesolowski-Louvel M."/>
            <person name="Westhof E."/>
            <person name="Wirth B."/>
            <person name="Zeniou-Meyer M."/>
            <person name="Zivanovic Y."/>
            <person name="Bolotin-Fukuhara M."/>
            <person name="Thierry A."/>
            <person name="Bouchier C."/>
            <person name="Caudron B."/>
            <person name="Scarpelli C."/>
            <person name="Gaillardin C."/>
            <person name="Weissenbach J."/>
            <person name="Wincker P."/>
            <person name="Souciet J.-L."/>
        </authorList>
    </citation>
    <scope>NUCLEOTIDE SEQUENCE [LARGE SCALE GENOMIC DNA]</scope>
    <source>
        <strain>CLIB 122 / E 150</strain>
    </source>
</reference>
<protein>
    <recommendedName>
        <fullName>Protein EFR3</fullName>
    </recommendedName>
</protein>
<accession>Q6C8F7</accession>
<comment type="similarity">
    <text evidence="1">Belongs to the EFR3 family.</text>
</comment>
<name>EFR3_YARLI</name>